<gene>
    <name evidence="4" type="primary">ACR5</name>
    <name evidence="6" type="ordered locus">At2g03730</name>
</gene>
<feature type="chain" id="PRO_0000431459" description="ACT domain-containing protein ACR5">
    <location>
        <begin position="1"/>
        <end position="456"/>
    </location>
</feature>
<feature type="domain" description="ACT 1" evidence="1">
    <location>
        <begin position="39"/>
        <end position="115"/>
    </location>
</feature>
<feature type="domain" description="ACT 2" evidence="1">
    <location>
        <begin position="130"/>
        <end position="207"/>
    </location>
</feature>
<feature type="domain" description="ACT 3" evidence="1">
    <location>
        <begin position="271"/>
        <end position="347"/>
    </location>
</feature>
<feature type="domain" description="ACT 4" evidence="1">
    <location>
        <begin position="349"/>
        <end position="432"/>
    </location>
</feature>
<sequence>MDVCLSYSYNMDDEIAKFIRRVNPPRVVIDNEVCKDVTVIKVDSANKHGILLEVVQVLTELNLTIKKAYISSDGGWFMDVFNVTDQDGNKVTDEIVLEYIRKSLGPDESSCFSPSMRSTIGVKQSVDYTVVELTGTDRPGLLSELCAVLMDLQCNVVNAEIWTHRAKAAAVLQVTDEETCSAITDPERLSKIRKLLGYVLTGGSSGRRFREPKTTVSSALNETHTDRKLHQLMFADRDYDEWENNVDDEDKCGRVIPDVDVSNLHDLDYSIVMIKCKDRPKLLFDTVFTLTDMNYVVSHASIDAEGPQAYQEYYIRHTDGSPVKSEAERQRVIKCLKAAIQRRVSEGLKLELCTSDRVGLLSDVTRIFRENSLTVTRAEVKTKGDKALNTFYVRDASGYQVDTKTIESIRQVIGQTILQVKGGNTDAKPSPQDSPTGFLFGVFKSRSFVNFGLIRS</sequence>
<organism>
    <name type="scientific">Arabidopsis thaliana</name>
    <name type="common">Mouse-ear cress</name>
    <dbReference type="NCBI Taxonomy" id="3702"/>
    <lineage>
        <taxon>Eukaryota</taxon>
        <taxon>Viridiplantae</taxon>
        <taxon>Streptophyta</taxon>
        <taxon>Embryophyta</taxon>
        <taxon>Tracheophyta</taxon>
        <taxon>Spermatophyta</taxon>
        <taxon>Magnoliopsida</taxon>
        <taxon>eudicotyledons</taxon>
        <taxon>Gunneridae</taxon>
        <taxon>Pentapetalae</taxon>
        <taxon>rosids</taxon>
        <taxon>malvids</taxon>
        <taxon>Brassicales</taxon>
        <taxon>Brassicaceae</taxon>
        <taxon>Camelineae</taxon>
        <taxon>Arabidopsis</taxon>
    </lineage>
</organism>
<comment type="function">
    <text evidence="3">May bind amino acids.</text>
</comment>
<comment type="tissue specificity">
    <text evidence="2">Expressed in stems and siliques.</text>
</comment>
<comment type="induction">
    <text evidence="2">By dark.</text>
</comment>
<comment type="sequence caution" evidence="5">
    <conflict type="frameshift">
        <sequence resource="EMBL-CDS" id="AAM93430"/>
    </conflict>
</comment>
<accession>Q9ZPQ8</accession>
<accession>Q8LJW2</accession>
<dbReference type="EMBL" id="AF528061">
    <property type="protein sequence ID" value="AAM93430.1"/>
    <property type="status" value="ALT_FRAME"/>
    <property type="molecule type" value="mRNA"/>
</dbReference>
<dbReference type="EMBL" id="AC006836">
    <property type="protein sequence ID" value="AAD20075.2"/>
    <property type="molecule type" value="Genomic_DNA"/>
</dbReference>
<dbReference type="EMBL" id="CP002685">
    <property type="protein sequence ID" value="AEC05742.1"/>
    <property type="molecule type" value="Genomic_DNA"/>
</dbReference>
<dbReference type="EMBL" id="CP002685">
    <property type="protein sequence ID" value="AEC05743.1"/>
    <property type="molecule type" value="Genomic_DNA"/>
</dbReference>
<dbReference type="EMBL" id="BT000908">
    <property type="protein sequence ID" value="AAN41308.1"/>
    <property type="molecule type" value="mRNA"/>
</dbReference>
<dbReference type="EMBL" id="AK317500">
    <property type="protein sequence ID" value="BAH20165.1"/>
    <property type="molecule type" value="mRNA"/>
</dbReference>
<dbReference type="PIR" id="F84451">
    <property type="entry name" value="F84451"/>
</dbReference>
<dbReference type="RefSeq" id="NP_001030965.1">
    <property type="nucleotide sequence ID" value="NM_001035888.2"/>
</dbReference>
<dbReference type="RefSeq" id="NP_565304.1">
    <property type="nucleotide sequence ID" value="NM_126420.2"/>
</dbReference>
<dbReference type="FunCoup" id="Q9ZPQ8">
    <property type="interactions" value="2"/>
</dbReference>
<dbReference type="STRING" id="3702.Q9ZPQ8"/>
<dbReference type="iPTMnet" id="Q9ZPQ8"/>
<dbReference type="PaxDb" id="3702-AT2G03730.2"/>
<dbReference type="ProteomicsDB" id="244397"/>
<dbReference type="EnsemblPlants" id="AT2G03730.1">
    <property type="protein sequence ID" value="AT2G03730.1"/>
    <property type="gene ID" value="AT2G03730"/>
</dbReference>
<dbReference type="EnsemblPlants" id="AT2G03730.2">
    <property type="protein sequence ID" value="AT2G03730.2"/>
    <property type="gene ID" value="AT2G03730"/>
</dbReference>
<dbReference type="GeneID" id="814900"/>
<dbReference type="Gramene" id="AT2G03730.1">
    <property type="protein sequence ID" value="AT2G03730.1"/>
    <property type="gene ID" value="AT2G03730"/>
</dbReference>
<dbReference type="Gramene" id="AT2G03730.2">
    <property type="protein sequence ID" value="AT2G03730.2"/>
    <property type="gene ID" value="AT2G03730"/>
</dbReference>
<dbReference type="KEGG" id="ath:AT2G03730"/>
<dbReference type="Araport" id="AT2G03730"/>
<dbReference type="TAIR" id="AT2G03730">
    <property type="gene designation" value="ACR5"/>
</dbReference>
<dbReference type="eggNOG" id="ENOG502QT1H">
    <property type="taxonomic scope" value="Eukaryota"/>
</dbReference>
<dbReference type="HOGENOM" id="CLU_031332_3_0_1"/>
<dbReference type="InParanoid" id="Q9ZPQ8"/>
<dbReference type="OMA" id="HTDRKLH"/>
<dbReference type="PhylomeDB" id="Q9ZPQ8"/>
<dbReference type="PRO" id="PR:Q9ZPQ8"/>
<dbReference type="Proteomes" id="UP000006548">
    <property type="component" value="Chromosome 2"/>
</dbReference>
<dbReference type="ExpressionAtlas" id="Q9ZPQ8">
    <property type="expression patterns" value="baseline and differential"/>
</dbReference>
<dbReference type="GO" id="GO:0016597">
    <property type="term" value="F:amino acid binding"/>
    <property type="evidence" value="ECO:0000250"/>
    <property type="project" value="TAIR"/>
</dbReference>
<dbReference type="CDD" id="cd04895">
    <property type="entry name" value="ACT_ACR_1"/>
    <property type="match status" value="1"/>
</dbReference>
<dbReference type="CDD" id="cd04897">
    <property type="entry name" value="ACT_ACR_3"/>
    <property type="match status" value="1"/>
</dbReference>
<dbReference type="FunFam" id="3.30.70.260:FF:000061">
    <property type="entry name" value="ACT domain repeat 1"/>
    <property type="match status" value="1"/>
</dbReference>
<dbReference type="Gene3D" id="3.30.70.260">
    <property type="match status" value="1"/>
</dbReference>
<dbReference type="InterPro" id="IPR040217">
    <property type="entry name" value="ACR1-12"/>
</dbReference>
<dbReference type="InterPro" id="IPR045865">
    <property type="entry name" value="ACT-like_dom_sf"/>
</dbReference>
<dbReference type="InterPro" id="IPR002912">
    <property type="entry name" value="ACT_dom"/>
</dbReference>
<dbReference type="PANTHER" id="PTHR31096">
    <property type="entry name" value="ACT DOMAIN-CONTAINING PROTEIN ACR4-RELATED"/>
    <property type="match status" value="1"/>
</dbReference>
<dbReference type="PANTHER" id="PTHR31096:SF46">
    <property type="entry name" value="ACT DOMAIN-CONTAINING PROTEIN ACR5"/>
    <property type="match status" value="1"/>
</dbReference>
<dbReference type="Pfam" id="PF01842">
    <property type="entry name" value="ACT"/>
    <property type="match status" value="3"/>
</dbReference>
<dbReference type="Pfam" id="PF24931">
    <property type="entry name" value="ACT_ACR9_3rd"/>
    <property type="match status" value="1"/>
</dbReference>
<dbReference type="SUPFAM" id="SSF55021">
    <property type="entry name" value="ACT-like"/>
    <property type="match status" value="3"/>
</dbReference>
<dbReference type="PROSITE" id="PS51671">
    <property type="entry name" value="ACT"/>
    <property type="match status" value="4"/>
</dbReference>
<reference key="1">
    <citation type="journal article" date="2002" name="Plant Physiol.">
        <title>Molecular characterization of a novel gene family encoding ACT domain repeat proteins in Arabidopsis.</title>
        <authorList>
            <person name="Hsieh M.-H."/>
            <person name="Goodman H.M."/>
        </authorList>
    </citation>
    <scope>NUCLEOTIDE SEQUENCE [MRNA]</scope>
    <scope>FUNCTION</scope>
    <scope>TISSUE SPECIFICITY</scope>
    <scope>INDUCTION</scope>
</reference>
<reference key="2">
    <citation type="journal article" date="1999" name="Nature">
        <title>Sequence and analysis of chromosome 2 of the plant Arabidopsis thaliana.</title>
        <authorList>
            <person name="Lin X."/>
            <person name="Kaul S."/>
            <person name="Rounsley S.D."/>
            <person name="Shea T.P."/>
            <person name="Benito M.-I."/>
            <person name="Town C.D."/>
            <person name="Fujii C.Y."/>
            <person name="Mason T.M."/>
            <person name="Bowman C.L."/>
            <person name="Barnstead M.E."/>
            <person name="Feldblyum T.V."/>
            <person name="Buell C.R."/>
            <person name="Ketchum K.A."/>
            <person name="Lee J.J."/>
            <person name="Ronning C.M."/>
            <person name="Koo H.L."/>
            <person name="Moffat K.S."/>
            <person name="Cronin L.A."/>
            <person name="Shen M."/>
            <person name="Pai G."/>
            <person name="Van Aken S."/>
            <person name="Umayam L."/>
            <person name="Tallon L.J."/>
            <person name="Gill J.E."/>
            <person name="Adams M.D."/>
            <person name="Carrera A.J."/>
            <person name="Creasy T.H."/>
            <person name="Goodman H.M."/>
            <person name="Somerville C.R."/>
            <person name="Copenhaver G.P."/>
            <person name="Preuss D."/>
            <person name="Nierman W.C."/>
            <person name="White O."/>
            <person name="Eisen J.A."/>
            <person name="Salzberg S.L."/>
            <person name="Fraser C.M."/>
            <person name="Venter J.C."/>
        </authorList>
    </citation>
    <scope>NUCLEOTIDE SEQUENCE [LARGE SCALE GENOMIC DNA]</scope>
    <source>
        <strain>cv. Columbia</strain>
    </source>
</reference>
<reference key="3">
    <citation type="journal article" date="2017" name="Plant J.">
        <title>Araport11: a complete reannotation of the Arabidopsis thaliana reference genome.</title>
        <authorList>
            <person name="Cheng C.Y."/>
            <person name="Krishnakumar V."/>
            <person name="Chan A.P."/>
            <person name="Thibaud-Nissen F."/>
            <person name="Schobel S."/>
            <person name="Town C.D."/>
        </authorList>
    </citation>
    <scope>GENOME REANNOTATION</scope>
    <source>
        <strain>cv. Columbia</strain>
    </source>
</reference>
<reference key="4">
    <citation type="journal article" date="2003" name="Science">
        <title>Empirical analysis of transcriptional activity in the Arabidopsis genome.</title>
        <authorList>
            <person name="Yamada K."/>
            <person name="Lim J."/>
            <person name="Dale J.M."/>
            <person name="Chen H."/>
            <person name="Shinn P."/>
            <person name="Palm C.J."/>
            <person name="Southwick A.M."/>
            <person name="Wu H.C."/>
            <person name="Kim C.J."/>
            <person name="Nguyen M."/>
            <person name="Pham P.K."/>
            <person name="Cheuk R.F."/>
            <person name="Karlin-Newmann G."/>
            <person name="Liu S.X."/>
            <person name="Lam B."/>
            <person name="Sakano H."/>
            <person name="Wu T."/>
            <person name="Yu G."/>
            <person name="Miranda M."/>
            <person name="Quach H.L."/>
            <person name="Tripp M."/>
            <person name="Chang C.H."/>
            <person name="Lee J.M."/>
            <person name="Toriumi M.J."/>
            <person name="Chan M.M."/>
            <person name="Tang C.C."/>
            <person name="Onodera C.S."/>
            <person name="Deng J.M."/>
            <person name="Akiyama K."/>
            <person name="Ansari Y."/>
            <person name="Arakawa T."/>
            <person name="Banh J."/>
            <person name="Banno F."/>
            <person name="Bowser L."/>
            <person name="Brooks S.Y."/>
            <person name="Carninci P."/>
            <person name="Chao Q."/>
            <person name="Choy N."/>
            <person name="Enju A."/>
            <person name="Goldsmith A.D."/>
            <person name="Gurjal M."/>
            <person name="Hansen N.F."/>
            <person name="Hayashizaki Y."/>
            <person name="Johnson-Hopson C."/>
            <person name="Hsuan V.W."/>
            <person name="Iida K."/>
            <person name="Karnes M."/>
            <person name="Khan S."/>
            <person name="Koesema E."/>
            <person name="Ishida J."/>
            <person name="Jiang P.X."/>
            <person name="Jones T."/>
            <person name="Kawai J."/>
            <person name="Kamiya A."/>
            <person name="Meyers C."/>
            <person name="Nakajima M."/>
            <person name="Narusaka M."/>
            <person name="Seki M."/>
            <person name="Sakurai T."/>
            <person name="Satou M."/>
            <person name="Tamse R."/>
            <person name="Vaysberg M."/>
            <person name="Wallender E.K."/>
            <person name="Wong C."/>
            <person name="Yamamura Y."/>
            <person name="Yuan S."/>
            <person name="Shinozaki K."/>
            <person name="Davis R.W."/>
            <person name="Theologis A."/>
            <person name="Ecker J.R."/>
        </authorList>
    </citation>
    <scope>NUCLEOTIDE SEQUENCE [LARGE SCALE MRNA]</scope>
    <source>
        <strain>cv. Columbia</strain>
    </source>
</reference>
<reference key="5">
    <citation type="journal article" date="2009" name="DNA Res.">
        <title>Analysis of multiple occurrences of alternative splicing events in Arabidopsis thaliana using novel sequenced full-length cDNAs.</title>
        <authorList>
            <person name="Iida K."/>
            <person name="Fukami-Kobayashi K."/>
            <person name="Toyoda A."/>
            <person name="Sakaki Y."/>
            <person name="Kobayashi M."/>
            <person name="Seki M."/>
            <person name="Shinozaki K."/>
        </authorList>
    </citation>
    <scope>NUCLEOTIDE SEQUENCE [LARGE SCALE MRNA]</scope>
    <source>
        <strain>cv. Columbia</strain>
    </source>
</reference>
<protein>
    <recommendedName>
        <fullName evidence="5">ACT domain-containing protein ACR5</fullName>
    </recommendedName>
    <alternativeName>
        <fullName evidence="3">Protein ACT DOMAIN REPEATS 5</fullName>
    </alternativeName>
</protein>
<proteinExistence type="evidence at transcript level"/>
<name>ACR5_ARATH</name>
<evidence type="ECO:0000255" key="1">
    <source>
        <dbReference type="PROSITE-ProRule" id="PRU01007"/>
    </source>
</evidence>
<evidence type="ECO:0000269" key="2">
    <source>
    </source>
</evidence>
<evidence type="ECO:0000303" key="3">
    <source>
    </source>
</evidence>
<evidence type="ECO:0000303" key="4">
    <source>
    </source>
</evidence>
<evidence type="ECO:0000305" key="5"/>
<evidence type="ECO:0000312" key="6">
    <source>
        <dbReference type="Araport" id="AT2G03730"/>
    </source>
</evidence>
<keyword id="KW-1185">Reference proteome</keyword>
<keyword id="KW-0677">Repeat</keyword>